<accession>Q9CLY7</accession>
<name>MTLD_PASMU</name>
<dbReference type="EC" id="1.1.1.17" evidence="1"/>
<dbReference type="EMBL" id="AE004439">
    <property type="protein sequence ID" value="AAK03146.1"/>
    <property type="molecule type" value="Genomic_DNA"/>
</dbReference>
<dbReference type="RefSeq" id="WP_010906996.1">
    <property type="nucleotide sequence ID" value="NC_002663.1"/>
</dbReference>
<dbReference type="SMR" id="Q9CLY7"/>
<dbReference type="STRING" id="272843.PM1062"/>
<dbReference type="EnsemblBacteria" id="AAK03146">
    <property type="protein sequence ID" value="AAK03146"/>
    <property type="gene ID" value="PM1062"/>
</dbReference>
<dbReference type="KEGG" id="pmu:PM1062"/>
<dbReference type="PATRIC" id="fig|272843.6.peg.1076"/>
<dbReference type="HOGENOM" id="CLU_036089_2_0_6"/>
<dbReference type="OrthoDB" id="271711at2"/>
<dbReference type="Proteomes" id="UP000000809">
    <property type="component" value="Chromosome"/>
</dbReference>
<dbReference type="GO" id="GO:0005829">
    <property type="term" value="C:cytosol"/>
    <property type="evidence" value="ECO:0007669"/>
    <property type="project" value="TreeGrafter"/>
</dbReference>
<dbReference type="GO" id="GO:0008926">
    <property type="term" value="F:mannitol-1-phosphate 5-dehydrogenase activity"/>
    <property type="evidence" value="ECO:0007669"/>
    <property type="project" value="UniProtKB-UniRule"/>
</dbReference>
<dbReference type="GO" id="GO:0019592">
    <property type="term" value="P:mannitol catabolic process"/>
    <property type="evidence" value="ECO:0007669"/>
    <property type="project" value="TreeGrafter"/>
</dbReference>
<dbReference type="FunFam" id="1.10.1040.10:FF:000009">
    <property type="entry name" value="Mannitol-1-phosphate 5-dehydrogenase"/>
    <property type="match status" value="1"/>
</dbReference>
<dbReference type="FunFam" id="3.40.50.720:FF:000075">
    <property type="entry name" value="Mannitol-1-phosphate 5-dehydrogenase"/>
    <property type="match status" value="1"/>
</dbReference>
<dbReference type="Gene3D" id="1.10.1040.10">
    <property type="entry name" value="N-(1-d-carboxylethyl)-l-norvaline Dehydrogenase, domain 2"/>
    <property type="match status" value="1"/>
</dbReference>
<dbReference type="Gene3D" id="3.40.50.720">
    <property type="entry name" value="NAD(P)-binding Rossmann-like Domain"/>
    <property type="match status" value="1"/>
</dbReference>
<dbReference type="HAMAP" id="MF_00196">
    <property type="entry name" value="Mannitol_dehydrog"/>
    <property type="match status" value="1"/>
</dbReference>
<dbReference type="InterPro" id="IPR008927">
    <property type="entry name" value="6-PGluconate_DH-like_C_sf"/>
</dbReference>
<dbReference type="InterPro" id="IPR013328">
    <property type="entry name" value="6PGD_dom2"/>
</dbReference>
<dbReference type="InterPro" id="IPR023028">
    <property type="entry name" value="Mannitol_1_phos_5_DH"/>
</dbReference>
<dbReference type="InterPro" id="IPR000669">
    <property type="entry name" value="Mannitol_DH"/>
</dbReference>
<dbReference type="InterPro" id="IPR013118">
    <property type="entry name" value="Mannitol_DH_C"/>
</dbReference>
<dbReference type="InterPro" id="IPR023027">
    <property type="entry name" value="Mannitol_DH_CS"/>
</dbReference>
<dbReference type="InterPro" id="IPR013131">
    <property type="entry name" value="Mannitol_DH_N"/>
</dbReference>
<dbReference type="InterPro" id="IPR036291">
    <property type="entry name" value="NAD(P)-bd_dom_sf"/>
</dbReference>
<dbReference type="NCBIfam" id="NF002646">
    <property type="entry name" value="PRK02318.1-2"/>
    <property type="match status" value="1"/>
</dbReference>
<dbReference type="NCBIfam" id="NF002647">
    <property type="entry name" value="PRK02318.1-3"/>
    <property type="match status" value="1"/>
</dbReference>
<dbReference type="NCBIfam" id="NF002650">
    <property type="entry name" value="PRK02318.2-2"/>
    <property type="match status" value="1"/>
</dbReference>
<dbReference type="NCBIfam" id="NF002652">
    <property type="entry name" value="PRK02318.2-5"/>
    <property type="match status" value="1"/>
</dbReference>
<dbReference type="PANTHER" id="PTHR30524:SF0">
    <property type="entry name" value="ALTRONATE OXIDOREDUCTASE-RELATED"/>
    <property type="match status" value="1"/>
</dbReference>
<dbReference type="PANTHER" id="PTHR30524">
    <property type="entry name" value="MANNITOL-1-PHOSPHATE 5-DEHYDROGENASE"/>
    <property type="match status" value="1"/>
</dbReference>
<dbReference type="Pfam" id="PF01232">
    <property type="entry name" value="Mannitol_dh"/>
    <property type="match status" value="1"/>
</dbReference>
<dbReference type="Pfam" id="PF08125">
    <property type="entry name" value="Mannitol_dh_C"/>
    <property type="match status" value="1"/>
</dbReference>
<dbReference type="PRINTS" id="PR00084">
    <property type="entry name" value="MTLDHDRGNASE"/>
</dbReference>
<dbReference type="SUPFAM" id="SSF48179">
    <property type="entry name" value="6-phosphogluconate dehydrogenase C-terminal domain-like"/>
    <property type="match status" value="1"/>
</dbReference>
<dbReference type="SUPFAM" id="SSF51735">
    <property type="entry name" value="NAD(P)-binding Rossmann-fold domains"/>
    <property type="match status" value="1"/>
</dbReference>
<dbReference type="PROSITE" id="PS00974">
    <property type="entry name" value="MANNITOL_DHGENASE"/>
    <property type="match status" value="1"/>
</dbReference>
<keyword id="KW-0520">NAD</keyword>
<keyword id="KW-0560">Oxidoreductase</keyword>
<keyword id="KW-1185">Reference proteome</keyword>
<feature type="chain" id="PRO_0000170715" description="Mannitol-1-phosphate 5-dehydrogenase">
    <location>
        <begin position="1"/>
        <end position="385"/>
    </location>
</feature>
<feature type="binding site" evidence="1">
    <location>
        <begin position="3"/>
        <end position="14"/>
    </location>
    <ligand>
        <name>NAD(+)</name>
        <dbReference type="ChEBI" id="CHEBI:57540"/>
    </ligand>
</feature>
<comment type="catalytic activity">
    <reaction evidence="1">
        <text>D-mannitol 1-phosphate + NAD(+) = beta-D-fructose 6-phosphate + NADH + H(+)</text>
        <dbReference type="Rhea" id="RHEA:19661"/>
        <dbReference type="ChEBI" id="CHEBI:15378"/>
        <dbReference type="ChEBI" id="CHEBI:57540"/>
        <dbReference type="ChEBI" id="CHEBI:57634"/>
        <dbReference type="ChEBI" id="CHEBI:57945"/>
        <dbReference type="ChEBI" id="CHEBI:61381"/>
        <dbReference type="EC" id="1.1.1.17"/>
    </reaction>
</comment>
<comment type="similarity">
    <text evidence="1">Belongs to the mannitol dehydrogenase family.</text>
</comment>
<reference key="1">
    <citation type="journal article" date="2001" name="Proc. Natl. Acad. Sci. U.S.A.">
        <title>Complete genomic sequence of Pasteurella multocida Pm70.</title>
        <authorList>
            <person name="May B.J."/>
            <person name="Zhang Q."/>
            <person name="Li L.L."/>
            <person name="Paustian M.L."/>
            <person name="Whittam T.S."/>
            <person name="Kapur V."/>
        </authorList>
    </citation>
    <scope>NUCLEOTIDE SEQUENCE [LARGE SCALE GENOMIC DNA]</scope>
    <source>
        <strain>Pm70</strain>
    </source>
</reference>
<sequence length="385" mass="42595">MKALHFGAGNIGRGFIGKLLADSGIQVIFADVNDHVIEQLKTQRAYPVKIVGDRLNVIETVSNVTGVNSKNEADIIACFTEVDLVTTAVGPNVLKIISSTIAKGLSARFRAGNTRPLNIIACENMVRGTSFLKDNVFSYLTPEEQQQAEAQIGFVDSAVDRIVPPVQFDPANPLLVTVEEFSEWIVDKTQFKGTIPAITGMEQTDNLMAFVERKLFTLNTGHATTAYLGKLKGHQFVKDSIDDPDIREAVKATMQESGAVLIKRYGFDPHAHAAYIEKILKRFANPYLQDDVDRVGREPLRKLSYNDRLIKPLRGTLEYGLPNQHLIQTIASALAYRNESDPQAVELAQLLQQDTLESAVKKITELTESNIVQQIVTAYNALQKN</sequence>
<gene>
    <name evidence="1" type="primary">mtlD</name>
    <name type="ordered locus">PM1062</name>
</gene>
<organism>
    <name type="scientific">Pasteurella multocida (strain Pm70)</name>
    <dbReference type="NCBI Taxonomy" id="272843"/>
    <lineage>
        <taxon>Bacteria</taxon>
        <taxon>Pseudomonadati</taxon>
        <taxon>Pseudomonadota</taxon>
        <taxon>Gammaproteobacteria</taxon>
        <taxon>Pasteurellales</taxon>
        <taxon>Pasteurellaceae</taxon>
        <taxon>Pasteurella</taxon>
    </lineage>
</organism>
<proteinExistence type="inferred from homology"/>
<protein>
    <recommendedName>
        <fullName evidence="1">Mannitol-1-phosphate 5-dehydrogenase</fullName>
        <ecNumber evidence="1">1.1.1.17</ecNumber>
    </recommendedName>
</protein>
<evidence type="ECO:0000255" key="1">
    <source>
        <dbReference type="HAMAP-Rule" id="MF_00196"/>
    </source>
</evidence>